<gene>
    <name evidence="1" type="primary">gpsA</name>
    <name type="ordered locus">SACOL1514</name>
</gene>
<comment type="function">
    <text evidence="1">Catalyzes the reduction of the glycolytic intermediate dihydroxyacetone phosphate (DHAP) to sn-glycerol 3-phosphate (G3P), the key precursor for phospholipid synthesis.</text>
</comment>
<comment type="catalytic activity">
    <reaction evidence="1">
        <text>sn-glycerol 3-phosphate + NAD(+) = dihydroxyacetone phosphate + NADH + H(+)</text>
        <dbReference type="Rhea" id="RHEA:11092"/>
        <dbReference type="ChEBI" id="CHEBI:15378"/>
        <dbReference type="ChEBI" id="CHEBI:57540"/>
        <dbReference type="ChEBI" id="CHEBI:57597"/>
        <dbReference type="ChEBI" id="CHEBI:57642"/>
        <dbReference type="ChEBI" id="CHEBI:57945"/>
        <dbReference type="EC" id="1.1.1.94"/>
    </reaction>
    <physiologicalReaction direction="right-to-left" evidence="1">
        <dbReference type="Rhea" id="RHEA:11094"/>
    </physiologicalReaction>
</comment>
<comment type="catalytic activity">
    <reaction evidence="1">
        <text>sn-glycerol 3-phosphate + NADP(+) = dihydroxyacetone phosphate + NADPH + H(+)</text>
        <dbReference type="Rhea" id="RHEA:11096"/>
        <dbReference type="ChEBI" id="CHEBI:15378"/>
        <dbReference type="ChEBI" id="CHEBI:57597"/>
        <dbReference type="ChEBI" id="CHEBI:57642"/>
        <dbReference type="ChEBI" id="CHEBI:57783"/>
        <dbReference type="ChEBI" id="CHEBI:58349"/>
        <dbReference type="EC" id="1.1.1.94"/>
    </reaction>
    <physiologicalReaction direction="right-to-left" evidence="1">
        <dbReference type="Rhea" id="RHEA:11098"/>
    </physiologicalReaction>
</comment>
<comment type="pathway">
    <text evidence="1">Membrane lipid metabolism; glycerophospholipid metabolism.</text>
</comment>
<comment type="subcellular location">
    <subcellularLocation>
        <location evidence="1">Cytoplasm</location>
    </subcellularLocation>
</comment>
<comment type="similarity">
    <text evidence="1">Belongs to the NAD-dependent glycerol-3-phosphate dehydrogenase family.</text>
</comment>
<evidence type="ECO:0000255" key="1">
    <source>
        <dbReference type="HAMAP-Rule" id="MF_00394"/>
    </source>
</evidence>
<organism>
    <name type="scientific">Staphylococcus aureus (strain COL)</name>
    <dbReference type="NCBI Taxonomy" id="93062"/>
    <lineage>
        <taxon>Bacteria</taxon>
        <taxon>Bacillati</taxon>
        <taxon>Bacillota</taxon>
        <taxon>Bacilli</taxon>
        <taxon>Bacillales</taxon>
        <taxon>Staphylococcaceae</taxon>
        <taxon>Staphylococcus</taxon>
    </lineage>
</organism>
<reference key="1">
    <citation type="journal article" date="2005" name="J. Bacteriol.">
        <title>Insights on evolution of virulence and resistance from the complete genome analysis of an early methicillin-resistant Staphylococcus aureus strain and a biofilm-producing methicillin-resistant Staphylococcus epidermidis strain.</title>
        <authorList>
            <person name="Gill S.R."/>
            <person name="Fouts D.E."/>
            <person name="Archer G.L."/>
            <person name="Mongodin E.F."/>
            <person name="DeBoy R.T."/>
            <person name="Ravel J."/>
            <person name="Paulsen I.T."/>
            <person name="Kolonay J.F."/>
            <person name="Brinkac L.M."/>
            <person name="Beanan M.J."/>
            <person name="Dodson R.J."/>
            <person name="Daugherty S.C."/>
            <person name="Madupu R."/>
            <person name="Angiuoli S.V."/>
            <person name="Durkin A.S."/>
            <person name="Haft D.H."/>
            <person name="Vamathevan J.J."/>
            <person name="Khouri H."/>
            <person name="Utterback T.R."/>
            <person name="Lee C."/>
            <person name="Dimitrov G."/>
            <person name="Jiang L."/>
            <person name="Qin H."/>
            <person name="Weidman J."/>
            <person name="Tran K."/>
            <person name="Kang K.H."/>
            <person name="Hance I.R."/>
            <person name="Nelson K.E."/>
            <person name="Fraser C.M."/>
        </authorList>
    </citation>
    <scope>NUCLEOTIDE SEQUENCE [LARGE SCALE GENOMIC DNA]</scope>
    <source>
        <strain>COL</strain>
    </source>
</reference>
<protein>
    <recommendedName>
        <fullName evidence="1">Glycerol-3-phosphate dehydrogenase [NAD(P)+]</fullName>
        <ecNumber evidence="1">1.1.1.94</ecNumber>
    </recommendedName>
    <alternativeName>
        <fullName evidence="1">NAD(P)(+)-dependent glycerol-3-phosphate dehydrogenase</fullName>
    </alternativeName>
    <alternativeName>
        <fullName evidence="1">NAD(P)H-dependent dihydroxyacetone-phosphate reductase</fullName>
    </alternativeName>
</protein>
<accession>Q5HFU9</accession>
<name>GPDA_STAAC</name>
<dbReference type="EC" id="1.1.1.94" evidence="1"/>
<dbReference type="EMBL" id="CP000046">
    <property type="protein sequence ID" value="AAW36709.1"/>
    <property type="molecule type" value="Genomic_DNA"/>
</dbReference>
<dbReference type="RefSeq" id="WP_000161738.1">
    <property type="nucleotide sequence ID" value="NZ_JBGOFO010000003.1"/>
</dbReference>
<dbReference type="SMR" id="Q5HFU9"/>
<dbReference type="KEGG" id="sac:SACOL1514"/>
<dbReference type="HOGENOM" id="CLU_033449_0_2_9"/>
<dbReference type="UniPathway" id="UPA00940"/>
<dbReference type="Proteomes" id="UP000000530">
    <property type="component" value="Chromosome"/>
</dbReference>
<dbReference type="GO" id="GO:0005829">
    <property type="term" value="C:cytosol"/>
    <property type="evidence" value="ECO:0007669"/>
    <property type="project" value="TreeGrafter"/>
</dbReference>
<dbReference type="GO" id="GO:0047952">
    <property type="term" value="F:glycerol-3-phosphate dehydrogenase [NAD(P)+] activity"/>
    <property type="evidence" value="ECO:0007669"/>
    <property type="project" value="UniProtKB-UniRule"/>
</dbReference>
<dbReference type="GO" id="GO:0051287">
    <property type="term" value="F:NAD binding"/>
    <property type="evidence" value="ECO:0007669"/>
    <property type="project" value="InterPro"/>
</dbReference>
<dbReference type="GO" id="GO:0005975">
    <property type="term" value="P:carbohydrate metabolic process"/>
    <property type="evidence" value="ECO:0007669"/>
    <property type="project" value="InterPro"/>
</dbReference>
<dbReference type="GO" id="GO:0046167">
    <property type="term" value="P:glycerol-3-phosphate biosynthetic process"/>
    <property type="evidence" value="ECO:0007669"/>
    <property type="project" value="UniProtKB-UniRule"/>
</dbReference>
<dbReference type="GO" id="GO:0046168">
    <property type="term" value="P:glycerol-3-phosphate catabolic process"/>
    <property type="evidence" value="ECO:0007669"/>
    <property type="project" value="InterPro"/>
</dbReference>
<dbReference type="GO" id="GO:0006650">
    <property type="term" value="P:glycerophospholipid metabolic process"/>
    <property type="evidence" value="ECO:0007669"/>
    <property type="project" value="UniProtKB-UniRule"/>
</dbReference>
<dbReference type="GO" id="GO:0008654">
    <property type="term" value="P:phospholipid biosynthetic process"/>
    <property type="evidence" value="ECO:0007669"/>
    <property type="project" value="UniProtKB-KW"/>
</dbReference>
<dbReference type="FunFam" id="1.10.1040.10:FF:000001">
    <property type="entry name" value="Glycerol-3-phosphate dehydrogenase [NAD(P)+]"/>
    <property type="match status" value="1"/>
</dbReference>
<dbReference type="FunFam" id="3.40.50.720:FF:000019">
    <property type="entry name" value="Glycerol-3-phosphate dehydrogenase [NAD(P)+]"/>
    <property type="match status" value="1"/>
</dbReference>
<dbReference type="Gene3D" id="1.10.1040.10">
    <property type="entry name" value="N-(1-d-carboxylethyl)-l-norvaline Dehydrogenase, domain 2"/>
    <property type="match status" value="1"/>
</dbReference>
<dbReference type="Gene3D" id="3.40.50.720">
    <property type="entry name" value="NAD(P)-binding Rossmann-like Domain"/>
    <property type="match status" value="1"/>
</dbReference>
<dbReference type="HAMAP" id="MF_00394">
    <property type="entry name" value="NAD_Glyc3P_dehydrog"/>
    <property type="match status" value="1"/>
</dbReference>
<dbReference type="InterPro" id="IPR008927">
    <property type="entry name" value="6-PGluconate_DH-like_C_sf"/>
</dbReference>
<dbReference type="InterPro" id="IPR013328">
    <property type="entry name" value="6PGD_dom2"/>
</dbReference>
<dbReference type="InterPro" id="IPR006168">
    <property type="entry name" value="G3P_DH_NAD-dep"/>
</dbReference>
<dbReference type="InterPro" id="IPR006109">
    <property type="entry name" value="G3P_DH_NAD-dep_C"/>
</dbReference>
<dbReference type="InterPro" id="IPR011128">
    <property type="entry name" value="G3P_DH_NAD-dep_N"/>
</dbReference>
<dbReference type="InterPro" id="IPR036291">
    <property type="entry name" value="NAD(P)-bd_dom_sf"/>
</dbReference>
<dbReference type="NCBIfam" id="NF000940">
    <property type="entry name" value="PRK00094.1-2"/>
    <property type="match status" value="1"/>
</dbReference>
<dbReference type="NCBIfam" id="NF000941">
    <property type="entry name" value="PRK00094.1-3"/>
    <property type="match status" value="1"/>
</dbReference>
<dbReference type="NCBIfam" id="NF000942">
    <property type="entry name" value="PRK00094.1-4"/>
    <property type="match status" value="1"/>
</dbReference>
<dbReference type="PANTHER" id="PTHR11728">
    <property type="entry name" value="GLYCEROL-3-PHOSPHATE DEHYDROGENASE"/>
    <property type="match status" value="1"/>
</dbReference>
<dbReference type="PANTHER" id="PTHR11728:SF1">
    <property type="entry name" value="GLYCEROL-3-PHOSPHATE DEHYDROGENASE [NAD(+)] 2, CHLOROPLASTIC"/>
    <property type="match status" value="1"/>
</dbReference>
<dbReference type="Pfam" id="PF07479">
    <property type="entry name" value="NAD_Gly3P_dh_C"/>
    <property type="match status" value="1"/>
</dbReference>
<dbReference type="Pfam" id="PF01210">
    <property type="entry name" value="NAD_Gly3P_dh_N"/>
    <property type="match status" value="1"/>
</dbReference>
<dbReference type="PIRSF" id="PIRSF000114">
    <property type="entry name" value="Glycerol-3-P_dh"/>
    <property type="match status" value="1"/>
</dbReference>
<dbReference type="PRINTS" id="PR00077">
    <property type="entry name" value="GPDHDRGNASE"/>
</dbReference>
<dbReference type="SUPFAM" id="SSF48179">
    <property type="entry name" value="6-phosphogluconate dehydrogenase C-terminal domain-like"/>
    <property type="match status" value="1"/>
</dbReference>
<dbReference type="SUPFAM" id="SSF51735">
    <property type="entry name" value="NAD(P)-binding Rossmann-fold domains"/>
    <property type="match status" value="1"/>
</dbReference>
<dbReference type="PROSITE" id="PS00957">
    <property type="entry name" value="NAD_G3PDH"/>
    <property type="match status" value="1"/>
</dbReference>
<feature type="chain" id="PRO_0000138023" description="Glycerol-3-phosphate dehydrogenase [NAD(P)+]">
    <location>
        <begin position="1"/>
        <end position="332"/>
    </location>
</feature>
<feature type="active site" description="Proton acceptor" evidence="1">
    <location>
        <position position="192"/>
    </location>
</feature>
<feature type="binding site" evidence="1">
    <location>
        <position position="11"/>
    </location>
    <ligand>
        <name>NADPH</name>
        <dbReference type="ChEBI" id="CHEBI:57783"/>
    </ligand>
</feature>
<feature type="binding site" evidence="1">
    <location>
        <position position="12"/>
    </location>
    <ligand>
        <name>NADPH</name>
        <dbReference type="ChEBI" id="CHEBI:57783"/>
    </ligand>
</feature>
<feature type="binding site" evidence="1">
    <location>
        <position position="32"/>
    </location>
    <ligand>
        <name>NADPH</name>
        <dbReference type="ChEBI" id="CHEBI:57783"/>
    </ligand>
</feature>
<feature type="binding site" evidence="1">
    <location>
        <position position="106"/>
    </location>
    <ligand>
        <name>NADPH</name>
        <dbReference type="ChEBI" id="CHEBI:57783"/>
    </ligand>
</feature>
<feature type="binding site" evidence="1">
    <location>
        <position position="106"/>
    </location>
    <ligand>
        <name>sn-glycerol 3-phosphate</name>
        <dbReference type="ChEBI" id="CHEBI:57597"/>
    </ligand>
</feature>
<feature type="binding site" evidence="1">
    <location>
        <position position="137"/>
    </location>
    <ligand>
        <name>sn-glycerol 3-phosphate</name>
        <dbReference type="ChEBI" id="CHEBI:57597"/>
    </ligand>
</feature>
<feature type="binding site" evidence="1">
    <location>
        <position position="139"/>
    </location>
    <ligand>
        <name>sn-glycerol 3-phosphate</name>
        <dbReference type="ChEBI" id="CHEBI:57597"/>
    </ligand>
</feature>
<feature type="binding site" evidence="1">
    <location>
        <position position="141"/>
    </location>
    <ligand>
        <name>NADPH</name>
        <dbReference type="ChEBI" id="CHEBI:57783"/>
    </ligand>
</feature>
<feature type="binding site" evidence="1">
    <location>
        <position position="192"/>
    </location>
    <ligand>
        <name>sn-glycerol 3-phosphate</name>
        <dbReference type="ChEBI" id="CHEBI:57597"/>
    </ligand>
</feature>
<feature type="binding site" evidence="1">
    <location>
        <position position="245"/>
    </location>
    <ligand>
        <name>sn-glycerol 3-phosphate</name>
        <dbReference type="ChEBI" id="CHEBI:57597"/>
    </ligand>
</feature>
<feature type="binding site" evidence="1">
    <location>
        <position position="255"/>
    </location>
    <ligand>
        <name>sn-glycerol 3-phosphate</name>
        <dbReference type="ChEBI" id="CHEBI:57597"/>
    </ligand>
</feature>
<feature type="binding site" evidence="1">
    <location>
        <position position="256"/>
    </location>
    <ligand>
        <name>NADPH</name>
        <dbReference type="ChEBI" id="CHEBI:57783"/>
    </ligand>
</feature>
<feature type="binding site" evidence="1">
    <location>
        <position position="256"/>
    </location>
    <ligand>
        <name>sn-glycerol 3-phosphate</name>
        <dbReference type="ChEBI" id="CHEBI:57597"/>
    </ligand>
</feature>
<feature type="binding site" evidence="1">
    <location>
        <position position="257"/>
    </location>
    <ligand>
        <name>sn-glycerol 3-phosphate</name>
        <dbReference type="ChEBI" id="CHEBI:57597"/>
    </ligand>
</feature>
<feature type="binding site" evidence="1">
    <location>
        <position position="280"/>
    </location>
    <ligand>
        <name>NADPH</name>
        <dbReference type="ChEBI" id="CHEBI:57783"/>
    </ligand>
</feature>
<feature type="binding site" evidence="1">
    <location>
        <position position="282"/>
    </location>
    <ligand>
        <name>NADPH</name>
        <dbReference type="ChEBI" id="CHEBI:57783"/>
    </ligand>
</feature>
<proteinExistence type="inferred from homology"/>
<keyword id="KW-0963">Cytoplasm</keyword>
<keyword id="KW-0444">Lipid biosynthesis</keyword>
<keyword id="KW-0443">Lipid metabolism</keyword>
<keyword id="KW-0520">NAD</keyword>
<keyword id="KW-0521">NADP</keyword>
<keyword id="KW-0547">Nucleotide-binding</keyword>
<keyword id="KW-0560">Oxidoreductase</keyword>
<keyword id="KW-0594">Phospholipid biosynthesis</keyword>
<keyword id="KW-1208">Phospholipid metabolism</keyword>
<sequence>MTKITVFGMGSFGTALANVLAENGHDVLMWGKNQDAVDELNTCHTNKKYLKYAKLDVNIIATSDMTKAIQFADIYLMALPTKAMREVASQINDKLTSKKTFIHVAKGIENGTFKRVSEMIEDSISPEYNAGIGVLSGPSHAEEVVVKQPTTVAASSKDKSVSKLTQDLFMNDYLRVYTNDDLIGVELGGALKNIIAVASGIVAGIGYGDNAKAALMTRGLAEISRLGEKLGADPMTFLGLGGIGDLIVTCTSTHSRNFTLGYKLGQGESMDQALSEMNMVVEGIYTTKSVYHLAKEKNVDMPITNALYRVLFENISVKECVKDLMERDKKSE</sequence>